<dbReference type="EMBL" id="BC120051">
    <property type="protein sequence ID" value="AAI20052.1"/>
    <property type="molecule type" value="mRNA"/>
</dbReference>
<dbReference type="RefSeq" id="NP_001069733.1">
    <property type="nucleotide sequence ID" value="NM_001076265.1"/>
</dbReference>
<dbReference type="FunCoup" id="Q0VCQ7">
    <property type="interactions" value="3688"/>
</dbReference>
<dbReference type="STRING" id="9913.ENSBTAP00000070996"/>
<dbReference type="PaxDb" id="9913-ENSBTAP00000007009"/>
<dbReference type="GeneID" id="541255"/>
<dbReference type="KEGG" id="bta:541255"/>
<dbReference type="CTD" id="79664"/>
<dbReference type="eggNOG" id="ENOG502QUWA">
    <property type="taxonomic scope" value="Eukaryota"/>
</dbReference>
<dbReference type="InParanoid" id="Q0VCQ7"/>
<dbReference type="OrthoDB" id="6288737at2759"/>
<dbReference type="Proteomes" id="UP000009136">
    <property type="component" value="Unplaced"/>
</dbReference>
<dbReference type="GO" id="GO:0015030">
    <property type="term" value="C:Cajal body"/>
    <property type="evidence" value="ECO:0000250"/>
    <property type="project" value="UniProtKB"/>
</dbReference>
<dbReference type="GO" id="GO:0000791">
    <property type="term" value="C:euchromatin"/>
    <property type="evidence" value="ECO:0000250"/>
    <property type="project" value="UniProtKB"/>
</dbReference>
<dbReference type="GO" id="GO:0035363">
    <property type="term" value="C:histone locus body"/>
    <property type="evidence" value="ECO:0000250"/>
    <property type="project" value="UniProtKB"/>
</dbReference>
<dbReference type="GO" id="GO:0008023">
    <property type="term" value="C:transcription elongation factor complex"/>
    <property type="evidence" value="ECO:0000250"/>
    <property type="project" value="UniProtKB"/>
</dbReference>
<dbReference type="GO" id="GO:0045945">
    <property type="term" value="P:positive regulation of transcription by RNA polymerase III"/>
    <property type="evidence" value="ECO:0000250"/>
    <property type="project" value="UniProtKB"/>
</dbReference>
<dbReference type="GO" id="GO:0042795">
    <property type="term" value="P:snRNA transcription by RNA polymerase II"/>
    <property type="evidence" value="ECO:0000250"/>
    <property type="project" value="UniProtKB"/>
</dbReference>
<dbReference type="GO" id="GO:0042796">
    <property type="term" value="P:snRNA transcription by RNA polymerase III"/>
    <property type="evidence" value="ECO:0000250"/>
    <property type="project" value="UniProtKB"/>
</dbReference>
<dbReference type="InterPro" id="IPR019535">
    <property type="entry name" value="ICE2_C"/>
</dbReference>
<dbReference type="PANTHER" id="PTHR14633">
    <property type="entry name" value="LITTLE ELONGATION COMPLEX SUBUNIT 2"/>
    <property type="match status" value="1"/>
</dbReference>
<dbReference type="PANTHER" id="PTHR14633:SF3">
    <property type="entry name" value="LITTLE ELONGATION COMPLEX SUBUNIT 2"/>
    <property type="match status" value="1"/>
</dbReference>
<dbReference type="Pfam" id="PF10505">
    <property type="entry name" value="NARG2_C"/>
    <property type="match status" value="1"/>
</dbReference>
<feature type="chain" id="PRO_0000297963" description="Little elongation complex subunit 2">
    <location>
        <begin position="1"/>
        <end position="981"/>
    </location>
</feature>
<feature type="region of interest" description="Disordered" evidence="4">
    <location>
        <begin position="406"/>
        <end position="427"/>
    </location>
</feature>
<feature type="region of interest" description="Disordered" evidence="4">
    <location>
        <begin position="475"/>
        <end position="516"/>
    </location>
</feature>
<feature type="region of interest" description="Disordered" evidence="4">
    <location>
        <begin position="591"/>
        <end position="627"/>
    </location>
</feature>
<feature type="region of interest" description="Disordered" evidence="4">
    <location>
        <begin position="669"/>
        <end position="690"/>
    </location>
</feature>
<feature type="region of interest" description="Disordered" evidence="4">
    <location>
        <begin position="930"/>
        <end position="981"/>
    </location>
</feature>
<feature type="compositionally biased region" description="Low complexity" evidence="4">
    <location>
        <begin position="408"/>
        <end position="424"/>
    </location>
</feature>
<feature type="compositionally biased region" description="Basic and acidic residues" evidence="4">
    <location>
        <begin position="480"/>
        <end position="489"/>
    </location>
</feature>
<feature type="compositionally biased region" description="Low complexity" evidence="4">
    <location>
        <begin position="599"/>
        <end position="624"/>
    </location>
</feature>
<feature type="compositionally biased region" description="Polar residues" evidence="4">
    <location>
        <begin position="671"/>
        <end position="686"/>
    </location>
</feature>
<feature type="compositionally biased region" description="Polar residues" evidence="4">
    <location>
        <begin position="954"/>
        <end position="969"/>
    </location>
</feature>
<feature type="modified residue" description="Phosphoserine" evidence="3">
    <location>
        <position position="17"/>
    </location>
</feature>
<feature type="modified residue" description="Phosphoserine" evidence="3">
    <location>
        <position position="326"/>
    </location>
</feature>
<feature type="modified residue" description="Phosphoserine" evidence="2">
    <location>
        <position position="573"/>
    </location>
</feature>
<feature type="modified residue" description="Phosphothreonine" evidence="2">
    <location>
        <position position="575"/>
    </location>
</feature>
<gene>
    <name type="primary">ICE2</name>
    <name type="synonym">NARG2</name>
</gene>
<evidence type="ECO:0000250" key="1"/>
<evidence type="ECO:0000250" key="2">
    <source>
        <dbReference type="UniProtKB" id="Q3UZ18"/>
    </source>
</evidence>
<evidence type="ECO:0000250" key="3">
    <source>
        <dbReference type="UniProtKB" id="Q659A1"/>
    </source>
</evidence>
<evidence type="ECO:0000256" key="4">
    <source>
        <dbReference type="SAM" id="MobiDB-lite"/>
    </source>
</evidence>
<evidence type="ECO:0000305" key="5"/>
<name>ICE2_BOVIN</name>
<comment type="function">
    <text evidence="1">Component of the little elongation complex (LEC), a complex required to regulate small nuclear RNA (snRNA) gene transcription by RNA polymerase II and III.</text>
</comment>
<comment type="subunit">
    <text evidence="1">Component of the little elongation complex (LEC), at least composed of ELL (ELL, ELL2 or ELL3), ZC3H8, ICE1 and ICE2. Interacts with ICE1 (via C-terminus domain). Interacts with ELL (By similarity).</text>
</comment>
<comment type="subcellular location">
    <subcellularLocation>
        <location evidence="1">Nucleus</location>
    </subcellularLocation>
    <text evidence="1">Colocalizes with COIL in subnuclear Cajal and histone locus bodies. Translocates in the LEC complex to Cajal and histone locus bodies at snRNA genes in a ICE1-dependent manner. Associates to transcriptionally active chromatin at snRNA genes (By similarity).</text>
</comment>
<comment type="similarity">
    <text evidence="5">Belongs to the ICE2 family.</text>
</comment>
<reference key="1">
    <citation type="submission" date="2006-08" db="EMBL/GenBank/DDBJ databases">
        <authorList>
            <consortium name="NIH - Mammalian Gene Collection (MGC) project"/>
        </authorList>
    </citation>
    <scope>NUCLEOTIDE SEQUENCE [LARGE SCALE MRNA]</scope>
    <source>
        <strain>Hereford</strain>
        <tissue>Fetal cerebellum</tissue>
    </source>
</reference>
<sequence>MTSMMAMGEPRLNWDVSPKNGLKTFFSRENYKDQSMAPSLKELCILSSRRIGENLNASAGSVENEPTVNSAAQAKEKVKTTVGMVLLPKPRVPYPRFSRFSQREQRNYVDLLVKYAKVPPNSKTVGINKNDYLQYLEMKKHVNEEVTEFLKFLQNSAKKCAQDYNMLSDDACLVTEQILKACIEQVKKYPEFYTLHEVTSLMGFFPFRIEMGFKLEKTLLALGSVKYVKTVFPSMPAKLQLSKDTIPAIETPEQIAAAMHYDISEDPNAEKLVARYHPQIALTSQSLFTLLNNHGPSYKEQWEIPVCIQVIPVAGSKPIKVIYINSPLPQKKMTMRERNQIFHEVPLKFMMSKNTSVPVSAVFMDKPEEYISEMDISYEVNECRKIETLENLDLEFDDDVTELETFGATTTKPSKSPSPASTSTVAPMTDTLTAPSIADTSEAPTSPDISAHSRSLSQILMEQLQKEKQLVTGMIDSGPEESKNKDDQRFIPCGEKVSNSDKPLVQDSDLKTSDPLQLESSMEIETSSKNDMATEMESVDERVNVLENTDTNSKEKTVTSEAANTEDVVLDSSDTDEDCLIIDMECQSNSHGKTAEVGSNLSSKPASLNSSSGQTSTGNQTNSTCPEESCVLKKPIKRVYKKFDPVGEILKMQDELLKPISRKIPELPLMNSENSKQPPISEQPSAPSDACSWPKSIWPSAFQKPKGRLPYELQDYVEDTSEYVAPQEGNFVYKLFSLQDLLLLVRCSVQRIETRPRSKKRKKIRRQFPVYVLPKVEYQACYGVEALTESELCRLWTESLLHSNSSFYVGHIDAFTSKLFLLEEITSEELKEKLSALKISSLFNILQHILRKLSSLQEGSYLLSHAAEDSSLLIYKTSDGKVTRTAYNLHKTHCGLPGVPSSLSVPWVPLDPSLLLPNHIHHGRIPCTFPPKSLGPTAQQKIGGTRMPTRSHRNSVSVETKSLPAQQVENEGVASSKRKIT</sequence>
<organism>
    <name type="scientific">Bos taurus</name>
    <name type="common">Bovine</name>
    <dbReference type="NCBI Taxonomy" id="9913"/>
    <lineage>
        <taxon>Eukaryota</taxon>
        <taxon>Metazoa</taxon>
        <taxon>Chordata</taxon>
        <taxon>Craniata</taxon>
        <taxon>Vertebrata</taxon>
        <taxon>Euteleostomi</taxon>
        <taxon>Mammalia</taxon>
        <taxon>Eutheria</taxon>
        <taxon>Laurasiatheria</taxon>
        <taxon>Artiodactyla</taxon>
        <taxon>Ruminantia</taxon>
        <taxon>Pecora</taxon>
        <taxon>Bovidae</taxon>
        <taxon>Bovinae</taxon>
        <taxon>Bos</taxon>
    </lineage>
</organism>
<proteinExistence type="evidence at transcript level"/>
<accession>Q0VCQ7</accession>
<keyword id="KW-0539">Nucleus</keyword>
<keyword id="KW-0597">Phosphoprotein</keyword>
<keyword id="KW-1185">Reference proteome</keyword>
<keyword id="KW-0804">Transcription</keyword>
<keyword id="KW-0805">Transcription regulation</keyword>
<protein>
    <recommendedName>
        <fullName>Little elongation complex subunit 2</fullName>
    </recommendedName>
    <alternativeName>
        <fullName>Interactor of little elongator complex ELL subunit 2</fullName>
    </alternativeName>
    <alternativeName>
        <fullName>NMDA receptor-regulated protein 2</fullName>
    </alternativeName>
</protein>